<organism>
    <name type="scientific">Exiguobacterium sp. (strain ATCC BAA-1283 / AT1b)</name>
    <dbReference type="NCBI Taxonomy" id="360911"/>
    <lineage>
        <taxon>Bacteria</taxon>
        <taxon>Bacillati</taxon>
        <taxon>Bacillota</taxon>
        <taxon>Bacilli</taxon>
        <taxon>Bacillales</taxon>
        <taxon>Bacillales Family XII. Incertae Sedis</taxon>
        <taxon>Exiguobacterium</taxon>
    </lineage>
</organism>
<evidence type="ECO:0000255" key="1">
    <source>
        <dbReference type="HAMAP-Rule" id="MF_00377"/>
    </source>
</evidence>
<accession>C4KZZ3</accession>
<comment type="function">
    <text evidence="1">Plays an essential role in the initiation and regulation of chromosomal replication. ATP-DnaA binds to the origin of replication (oriC) to initiate formation of the DNA replication initiation complex once per cell cycle. Binds the DnaA box (a 9 base pair repeat at the origin) and separates the double-stranded (ds)DNA. Forms a right-handed helical filament on oriC DNA; dsDNA binds to the exterior of the filament while single-stranded (ss)DNA is stabiized in the filament's interior. The ATP-DnaA-oriC complex binds and stabilizes one strand of the AT-rich DNA unwinding element (DUE), permitting loading of DNA polymerase. After initiation quickly degrades to an ADP-DnaA complex that is not apt for DNA replication. Binds acidic phospholipids.</text>
</comment>
<comment type="subunit">
    <text evidence="1">Oligomerizes as a right-handed, spiral filament on DNA at oriC.</text>
</comment>
<comment type="subcellular location">
    <subcellularLocation>
        <location evidence="1">Cytoplasm</location>
    </subcellularLocation>
</comment>
<comment type="domain">
    <text evidence="1">Domain I is involved in oligomerization and binding regulators, domain II is flexibile and of varying length in different bacteria, domain III forms the AAA+ region, while domain IV binds dsDNA.</text>
</comment>
<comment type="similarity">
    <text evidence="1">Belongs to the DnaA family.</text>
</comment>
<protein>
    <recommendedName>
        <fullName evidence="1">Chromosomal replication initiator protein DnaA</fullName>
    </recommendedName>
</protein>
<gene>
    <name evidence="1" type="primary">dnaA</name>
    <name type="ordered locus">EAT1b_1730</name>
</gene>
<sequence length="459" mass="51868">MKNAREIWRNVLSVIEEEERTPKASFDMWLKSTEGISLMGTTLVVSAPASFIVTWLERQYLSLLQDTVEEITNNKLEIHFIEESQAHKYAPADGSSNESIAVTETKEQPVLLPSKEEGDLGQLNDKYIFETFVIGSGNRFAHAASLAVAEAPARAYNPLFIYGGVGLGKTHLMHAIGHYVKGQKPGARIAYVSSEKFTNEFINSIRDNKTGEFRNRYRNIDVLLIDDIQFLAGKEQTQEEFFHTFNALHNDQKQIVISSDRPPKEIPTLEDRLRSRFEWGLITDITPPDLETRIAILRKKATAEGLDISNEVMLYIANQIDTNIRELEGALTRVVAYAKLVGRPIDPDVAAEALHNIMPVQEAKKIVIRDIQEVVGQHFNIQVEELNSKKRTKTLAFPRQIAMYLSREMTESSLPKIGEEFGGRDHTTVIHAHEKISTLLKNDVEMQETIQTLKKALSN</sequence>
<keyword id="KW-0067">ATP-binding</keyword>
<keyword id="KW-0963">Cytoplasm</keyword>
<keyword id="KW-0235">DNA replication</keyword>
<keyword id="KW-0238">DNA-binding</keyword>
<keyword id="KW-0446">Lipid-binding</keyword>
<keyword id="KW-0547">Nucleotide-binding</keyword>
<dbReference type="EMBL" id="CP001615">
    <property type="protein sequence ID" value="ACQ70656.1"/>
    <property type="molecule type" value="Genomic_DNA"/>
</dbReference>
<dbReference type="RefSeq" id="WP_015880215.1">
    <property type="nucleotide sequence ID" value="NC_012673.1"/>
</dbReference>
<dbReference type="SMR" id="C4KZZ3"/>
<dbReference type="STRING" id="360911.EAT1b_1730"/>
<dbReference type="KEGG" id="eat:EAT1b_1730"/>
<dbReference type="eggNOG" id="COG0593">
    <property type="taxonomic scope" value="Bacteria"/>
</dbReference>
<dbReference type="HOGENOM" id="CLU_026910_3_1_9"/>
<dbReference type="OrthoDB" id="9807019at2"/>
<dbReference type="Proteomes" id="UP000000716">
    <property type="component" value="Chromosome"/>
</dbReference>
<dbReference type="GO" id="GO:0005737">
    <property type="term" value="C:cytoplasm"/>
    <property type="evidence" value="ECO:0007669"/>
    <property type="project" value="UniProtKB-SubCell"/>
</dbReference>
<dbReference type="GO" id="GO:0005886">
    <property type="term" value="C:plasma membrane"/>
    <property type="evidence" value="ECO:0007669"/>
    <property type="project" value="TreeGrafter"/>
</dbReference>
<dbReference type="GO" id="GO:0005524">
    <property type="term" value="F:ATP binding"/>
    <property type="evidence" value="ECO:0007669"/>
    <property type="project" value="UniProtKB-UniRule"/>
</dbReference>
<dbReference type="GO" id="GO:0016887">
    <property type="term" value="F:ATP hydrolysis activity"/>
    <property type="evidence" value="ECO:0007669"/>
    <property type="project" value="InterPro"/>
</dbReference>
<dbReference type="GO" id="GO:0003688">
    <property type="term" value="F:DNA replication origin binding"/>
    <property type="evidence" value="ECO:0007669"/>
    <property type="project" value="UniProtKB-UniRule"/>
</dbReference>
<dbReference type="GO" id="GO:0008289">
    <property type="term" value="F:lipid binding"/>
    <property type="evidence" value="ECO:0007669"/>
    <property type="project" value="UniProtKB-KW"/>
</dbReference>
<dbReference type="GO" id="GO:0006270">
    <property type="term" value="P:DNA replication initiation"/>
    <property type="evidence" value="ECO:0007669"/>
    <property type="project" value="UniProtKB-UniRule"/>
</dbReference>
<dbReference type="GO" id="GO:0006275">
    <property type="term" value="P:regulation of DNA replication"/>
    <property type="evidence" value="ECO:0007669"/>
    <property type="project" value="UniProtKB-UniRule"/>
</dbReference>
<dbReference type="CDD" id="cd00009">
    <property type="entry name" value="AAA"/>
    <property type="match status" value="1"/>
</dbReference>
<dbReference type="CDD" id="cd06571">
    <property type="entry name" value="Bac_DnaA_C"/>
    <property type="match status" value="1"/>
</dbReference>
<dbReference type="FunFam" id="1.10.1750.10:FF:000003">
    <property type="entry name" value="Chromosomal replication initiator protein DnaA"/>
    <property type="match status" value="1"/>
</dbReference>
<dbReference type="FunFam" id="1.10.8.60:FF:000003">
    <property type="entry name" value="Chromosomal replication initiator protein DnaA"/>
    <property type="match status" value="1"/>
</dbReference>
<dbReference type="FunFam" id="3.40.50.300:FF:000150">
    <property type="entry name" value="Chromosomal replication initiator protein DnaA"/>
    <property type="match status" value="1"/>
</dbReference>
<dbReference type="Gene3D" id="1.10.1750.10">
    <property type="match status" value="1"/>
</dbReference>
<dbReference type="Gene3D" id="1.10.8.60">
    <property type="match status" value="1"/>
</dbReference>
<dbReference type="Gene3D" id="3.30.300.180">
    <property type="match status" value="1"/>
</dbReference>
<dbReference type="Gene3D" id="3.40.50.300">
    <property type="entry name" value="P-loop containing nucleotide triphosphate hydrolases"/>
    <property type="match status" value="1"/>
</dbReference>
<dbReference type="HAMAP" id="MF_00377">
    <property type="entry name" value="DnaA_bact"/>
    <property type="match status" value="1"/>
</dbReference>
<dbReference type="InterPro" id="IPR003593">
    <property type="entry name" value="AAA+_ATPase"/>
</dbReference>
<dbReference type="InterPro" id="IPR001957">
    <property type="entry name" value="Chromosome_initiator_DnaA"/>
</dbReference>
<dbReference type="InterPro" id="IPR020591">
    <property type="entry name" value="Chromosome_initiator_DnaA-like"/>
</dbReference>
<dbReference type="InterPro" id="IPR018312">
    <property type="entry name" value="Chromosome_initiator_DnaA_CS"/>
</dbReference>
<dbReference type="InterPro" id="IPR013159">
    <property type="entry name" value="DnaA_C"/>
</dbReference>
<dbReference type="InterPro" id="IPR013317">
    <property type="entry name" value="DnaA_dom"/>
</dbReference>
<dbReference type="InterPro" id="IPR024633">
    <property type="entry name" value="DnaA_N_dom"/>
</dbReference>
<dbReference type="InterPro" id="IPR038454">
    <property type="entry name" value="DnaA_N_sf"/>
</dbReference>
<dbReference type="InterPro" id="IPR027417">
    <property type="entry name" value="P-loop_NTPase"/>
</dbReference>
<dbReference type="InterPro" id="IPR010921">
    <property type="entry name" value="Trp_repressor/repl_initiator"/>
</dbReference>
<dbReference type="NCBIfam" id="TIGR00362">
    <property type="entry name" value="DnaA"/>
    <property type="match status" value="1"/>
</dbReference>
<dbReference type="NCBIfam" id="NF010686">
    <property type="entry name" value="PRK14086.1"/>
    <property type="match status" value="1"/>
</dbReference>
<dbReference type="PANTHER" id="PTHR30050">
    <property type="entry name" value="CHROMOSOMAL REPLICATION INITIATOR PROTEIN DNAA"/>
    <property type="match status" value="1"/>
</dbReference>
<dbReference type="PANTHER" id="PTHR30050:SF2">
    <property type="entry name" value="CHROMOSOMAL REPLICATION INITIATOR PROTEIN DNAA"/>
    <property type="match status" value="1"/>
</dbReference>
<dbReference type="Pfam" id="PF00308">
    <property type="entry name" value="Bac_DnaA"/>
    <property type="match status" value="1"/>
</dbReference>
<dbReference type="Pfam" id="PF08299">
    <property type="entry name" value="Bac_DnaA_C"/>
    <property type="match status" value="1"/>
</dbReference>
<dbReference type="Pfam" id="PF11638">
    <property type="entry name" value="DnaA_N"/>
    <property type="match status" value="1"/>
</dbReference>
<dbReference type="PRINTS" id="PR00051">
    <property type="entry name" value="DNAA"/>
</dbReference>
<dbReference type="SMART" id="SM00382">
    <property type="entry name" value="AAA"/>
    <property type="match status" value="1"/>
</dbReference>
<dbReference type="SMART" id="SM00760">
    <property type="entry name" value="Bac_DnaA_C"/>
    <property type="match status" value="1"/>
</dbReference>
<dbReference type="SUPFAM" id="SSF52540">
    <property type="entry name" value="P-loop containing nucleoside triphosphate hydrolases"/>
    <property type="match status" value="1"/>
</dbReference>
<dbReference type="SUPFAM" id="SSF48295">
    <property type="entry name" value="TrpR-like"/>
    <property type="match status" value="1"/>
</dbReference>
<dbReference type="PROSITE" id="PS01008">
    <property type="entry name" value="DNAA"/>
    <property type="match status" value="1"/>
</dbReference>
<reference key="1">
    <citation type="journal article" date="2011" name="J. Bacteriol.">
        <title>Complete genome sequence of the Thermophilic Bacterium Exiguobacterium sp. AT1b.</title>
        <authorList>
            <person name="Vishnivetskaya T.A."/>
            <person name="Lucas S."/>
            <person name="Copeland A."/>
            <person name="Lapidus A."/>
            <person name="Glavina del Rio T."/>
            <person name="Dalin E."/>
            <person name="Tice H."/>
            <person name="Bruce D.C."/>
            <person name="Goodwin L.A."/>
            <person name="Pitluck S."/>
            <person name="Saunders E."/>
            <person name="Brettin T."/>
            <person name="Detter C."/>
            <person name="Han C."/>
            <person name="Larimer F."/>
            <person name="Land M.L."/>
            <person name="Hauser L.J."/>
            <person name="Kyrpides N.C."/>
            <person name="Ovchinnikova G."/>
            <person name="Kathariou S."/>
            <person name="Ramaley R.F."/>
            <person name="Rodrigues D.F."/>
            <person name="Hendrix C."/>
            <person name="Richardson P."/>
            <person name="Tiedje J.M."/>
        </authorList>
    </citation>
    <scope>NUCLEOTIDE SEQUENCE [LARGE SCALE GENOMIC DNA]</scope>
    <source>
        <strain>ATCC BAA-1283 / AT1b</strain>
    </source>
</reference>
<proteinExistence type="inferred from homology"/>
<name>DNAA_EXISA</name>
<feature type="chain" id="PRO_1000205652" description="Chromosomal replication initiator protein DnaA">
    <location>
        <begin position="1"/>
        <end position="459"/>
    </location>
</feature>
<feature type="region of interest" description="Domain I, interacts with DnaA modulators" evidence="1">
    <location>
        <begin position="1"/>
        <end position="83"/>
    </location>
</feature>
<feature type="region of interest" description="Domain II" evidence="1">
    <location>
        <begin position="83"/>
        <end position="121"/>
    </location>
</feature>
<feature type="region of interest" description="Domain III, AAA+ region" evidence="1">
    <location>
        <begin position="122"/>
        <end position="338"/>
    </location>
</feature>
<feature type="region of interest" description="Domain IV, binds dsDNA" evidence="1">
    <location>
        <begin position="339"/>
        <end position="459"/>
    </location>
</feature>
<feature type="binding site" evidence="1">
    <location>
        <position position="166"/>
    </location>
    <ligand>
        <name>ATP</name>
        <dbReference type="ChEBI" id="CHEBI:30616"/>
    </ligand>
</feature>
<feature type="binding site" evidence="1">
    <location>
        <position position="168"/>
    </location>
    <ligand>
        <name>ATP</name>
        <dbReference type="ChEBI" id="CHEBI:30616"/>
    </ligand>
</feature>
<feature type="binding site" evidence="1">
    <location>
        <position position="169"/>
    </location>
    <ligand>
        <name>ATP</name>
        <dbReference type="ChEBI" id="CHEBI:30616"/>
    </ligand>
</feature>
<feature type="binding site" evidence="1">
    <location>
        <position position="170"/>
    </location>
    <ligand>
        <name>ATP</name>
        <dbReference type="ChEBI" id="CHEBI:30616"/>
    </ligand>
</feature>